<proteinExistence type="evidence at protein level"/>
<evidence type="ECO:0000255" key="1"/>
<evidence type="ECO:0000255" key="2">
    <source>
        <dbReference type="PROSITE-ProRule" id="PRU00040"/>
    </source>
</evidence>
<evidence type="ECO:0000269" key="3">
    <source>
    </source>
</evidence>
<evidence type="ECO:0000269" key="4">
    <source>
    </source>
</evidence>
<evidence type="ECO:0000269" key="5">
    <source>
    </source>
</evidence>
<evidence type="ECO:0000269" key="6">
    <source>
    </source>
</evidence>
<evidence type="ECO:0000269" key="7">
    <source>
    </source>
</evidence>
<evidence type="ECO:0000303" key="8">
    <source>
    </source>
</evidence>
<evidence type="ECO:0000305" key="9"/>
<evidence type="ECO:0007829" key="10">
    <source>
        <dbReference type="PDB" id="2KV3"/>
    </source>
</evidence>
<gene>
    <name type="primary">REG4</name>
    <name type="synonym">GISP</name>
    <name type="synonym">RELP</name>
</gene>
<accession>Q9BYZ8</accession>
<accession>Q8NER6</accession>
<accession>Q8NER7</accession>
<organism>
    <name type="scientific">Homo sapiens</name>
    <name type="common">Human</name>
    <dbReference type="NCBI Taxonomy" id="9606"/>
    <lineage>
        <taxon>Eukaryota</taxon>
        <taxon>Metazoa</taxon>
        <taxon>Chordata</taxon>
        <taxon>Craniata</taxon>
        <taxon>Vertebrata</taxon>
        <taxon>Euteleostomi</taxon>
        <taxon>Mammalia</taxon>
        <taxon>Eutheria</taxon>
        <taxon>Euarchontoglires</taxon>
        <taxon>Primates</taxon>
        <taxon>Haplorrhini</taxon>
        <taxon>Catarrhini</taxon>
        <taxon>Hominidae</taxon>
        <taxon>Homo</taxon>
    </lineage>
</organism>
<sequence>MASRSMRLLLLLSCLAKTGVLGDIIMRPSCAPGWFYHKSNCYGYFRKLRNWSDAELECQSYGNGAHLASILSLKEASTIAEYISGYQRSQPIWIGLHDPQKRQQWQWIDGAMYLYRSWSGKSMGGNKHCAEMSSNNNFLTWSSNECNKRQHFLCKYRP</sequence>
<comment type="function">
    <text evidence="5 7">Calcium-independent lectin displaying mannose-binding specificity and able to maintain carbohydrate recognition activity in an acidic environment. May be involved in inflammatory and metaplastic responses of the gastrointestinal epithelium.</text>
</comment>
<comment type="subcellular location">
    <subcellularLocation>
        <location evidence="5">Secreted</location>
    </subcellularLocation>
</comment>
<comment type="alternative products">
    <event type="alternative splicing"/>
    <isoform>
        <id>Q9BYZ8-1</id>
        <name>1</name>
        <sequence type="displayed"/>
    </isoform>
    <isoform>
        <id>Q9BYZ8-2</id>
        <name>2</name>
        <sequence type="described" ref="VSP_014305 VSP_014308"/>
    </isoform>
</comment>
<comment type="tissue specificity">
    <text evidence="3 4 5">Highly expressed in the gastrointestinal tract including the duodenum, jejunum, ileum, ileocecum, appendix, descending colon, pancreas and small intestine. Weakly expressed in normal colon and stomach. Strongly expressed in most colorectal tumors than in normal colon. Preferentially expressed in mucinous tumors and in some cases neuro-endocrine tumors. Expressed in mucus-secreting cells and enterocyte-like cells. In small intestine expressed at the basal perinuclear zone of goblet cells.</text>
</comment>
<comment type="induction">
    <text evidence="3 4 5">Up-regulated by mucosal injury from active Crohn's disease or ulcerative colitis. Up-regulated in colorectal tumors. Up-regulated in epithelial cells at regenerating margins of peptic ulcers in the stomach and duodenum.</text>
</comment>
<comment type="sequence caution" evidence="9">
    <conflict type="miscellaneous discrepancy">
        <sequence resource="EMBL-CDS" id="AAM95599"/>
    </conflict>
    <text>Aberrant splicing.</text>
</comment>
<comment type="online information" name="Atlas of Genetics and Cytogenetics in Oncology and Haematology">
    <link uri="https://atlasgeneticsoncology.org/gene/485/REGIV"/>
</comment>
<comment type="online information" name="Functional Glycomics Gateway - Glycan Binding">
    <link uri="http://www.functionalglycomics.org/glycomics/GBPServlet?&amp;operationType=view&amp;cbpId=cbp_hum_Ctlect_257"/>
    <text>Regenerating protein IV</text>
</comment>
<feature type="signal peptide" evidence="6">
    <location>
        <begin position="1"/>
        <end position="22"/>
    </location>
</feature>
<feature type="chain" id="PRO_0000017437" description="Regenerating islet-derived protein 4">
    <location>
        <begin position="23"/>
        <end position="158"/>
    </location>
</feature>
<feature type="domain" description="C-type lectin" evidence="2">
    <location>
        <begin position="37"/>
        <end position="155"/>
    </location>
</feature>
<feature type="binding site">
    <location>
        <begin position="98"/>
        <end position="103"/>
    </location>
    <ligand>
        <name>a carbohydrate</name>
        <dbReference type="ChEBI" id="CHEBI:16646"/>
    </ligand>
</feature>
<feature type="binding site">
    <location>
        <begin position="135"/>
        <end position="137"/>
    </location>
    <ligand>
        <name>a carbohydrate</name>
        <dbReference type="ChEBI" id="CHEBI:16646"/>
    </ligand>
</feature>
<feature type="glycosylation site" description="N-linked (GlcNAc...) asparagine" evidence="1">
    <location>
        <position position="50"/>
    </location>
</feature>
<feature type="disulfide bond" evidence="2 7">
    <location>
        <begin position="30"/>
        <end position="41"/>
    </location>
</feature>
<feature type="disulfide bond" evidence="2 7">
    <location>
        <begin position="58"/>
        <end position="154"/>
    </location>
</feature>
<feature type="disulfide bond" evidence="2 7">
    <location>
        <begin position="129"/>
        <end position="146"/>
    </location>
</feature>
<feature type="splice variant" id="VSP_014305" description="In isoform 2." evidence="8">
    <original>LECQSYGNGAHLASILSLKEASTIAEYISGYQRSQPIWIGLHDPQKRQQWQWIDGAMYLYRSWSGKSMGGNKHCAEMSS</original>
    <variation>VRNLLPAWPGLSRAKDQPEPQISFDSGSSVLPGHYEEKPLWLVKWREEGCVFNSFNSVSIAEAGAVCQTLDGLQAHTDT</variation>
    <location>
        <begin position="56"/>
        <end position="134"/>
    </location>
</feature>
<feature type="splice variant" id="VSP_014308" description="In isoform 2." evidence="8">
    <location>
        <begin position="135"/>
        <end position="158"/>
    </location>
</feature>
<feature type="sequence variant" id="VAR_050122" description="In dbSNP:rs34996202.">
    <original>N</original>
    <variation>H</variation>
    <location>
        <position position="135"/>
    </location>
</feature>
<feature type="strand" evidence="10">
    <location>
        <begin position="40"/>
        <end position="49"/>
    </location>
</feature>
<feature type="helix" evidence="10">
    <location>
        <begin position="51"/>
        <end position="59"/>
    </location>
</feature>
<feature type="strand" evidence="10">
    <location>
        <begin position="62"/>
        <end position="64"/>
    </location>
</feature>
<feature type="helix" evidence="10">
    <location>
        <begin position="73"/>
        <end position="83"/>
    </location>
</feature>
<feature type="strand" evidence="10">
    <location>
        <begin position="95"/>
        <end position="97"/>
    </location>
</feature>
<feature type="strand" evidence="10">
    <location>
        <begin position="99"/>
        <end position="103"/>
    </location>
</feature>
<feature type="strand" evidence="10">
    <location>
        <begin position="129"/>
        <end position="132"/>
    </location>
</feature>
<feature type="strand" evidence="10">
    <location>
        <begin position="141"/>
        <end position="144"/>
    </location>
</feature>
<feature type="strand" evidence="10">
    <location>
        <begin position="150"/>
        <end position="156"/>
    </location>
</feature>
<dbReference type="EMBL" id="AY007243">
    <property type="protein sequence ID" value="AAG02562.1"/>
    <property type="molecule type" value="mRNA"/>
</dbReference>
<dbReference type="EMBL" id="AY126670">
    <property type="protein sequence ID" value="AAM95598.1"/>
    <property type="molecule type" value="mRNA"/>
</dbReference>
<dbReference type="EMBL" id="AY126671">
    <property type="protein sequence ID" value="AAM95599.1"/>
    <property type="status" value="ALT_SEQ"/>
    <property type="molecule type" value="mRNA"/>
</dbReference>
<dbReference type="EMBL" id="AY126672">
    <property type="protein sequence ID" value="AAM95600.1"/>
    <property type="molecule type" value="mRNA"/>
</dbReference>
<dbReference type="EMBL" id="AF345934">
    <property type="protein sequence ID" value="AAK59869.1"/>
    <property type="molecule type" value="mRNA"/>
</dbReference>
<dbReference type="EMBL" id="AF254415">
    <property type="protein sequence ID" value="AAK48435.1"/>
    <property type="molecule type" value="mRNA"/>
</dbReference>
<dbReference type="EMBL" id="AL359752">
    <property type="status" value="NOT_ANNOTATED_CDS"/>
    <property type="molecule type" value="Genomic_DNA"/>
</dbReference>
<dbReference type="EMBL" id="BC017089">
    <property type="protein sequence ID" value="AAH17089.1"/>
    <property type="molecule type" value="mRNA"/>
</dbReference>
<dbReference type="CCDS" id="CCDS53354.1">
    <molecule id="Q9BYZ8-2"/>
</dbReference>
<dbReference type="CCDS" id="CCDS906.1">
    <molecule id="Q9BYZ8-1"/>
</dbReference>
<dbReference type="RefSeq" id="NP_001152824.1">
    <molecule id="Q9BYZ8-1"/>
    <property type="nucleotide sequence ID" value="NM_001159352.2"/>
</dbReference>
<dbReference type="RefSeq" id="NP_001152825.1">
    <molecule id="Q9BYZ8-2"/>
    <property type="nucleotide sequence ID" value="NM_001159353.2"/>
</dbReference>
<dbReference type="RefSeq" id="NP_114433.1">
    <molecule id="Q9BYZ8-1"/>
    <property type="nucleotide sequence ID" value="NM_032044.4"/>
</dbReference>
<dbReference type="PDB" id="2KV3">
    <property type="method" value="NMR"/>
    <property type="chains" value="A=29-158"/>
</dbReference>
<dbReference type="PDBsum" id="2KV3"/>
<dbReference type="BMRB" id="Q9BYZ8"/>
<dbReference type="SMR" id="Q9BYZ8"/>
<dbReference type="BioGRID" id="123843">
    <property type="interactions" value="8"/>
</dbReference>
<dbReference type="FunCoup" id="Q9BYZ8">
    <property type="interactions" value="398"/>
</dbReference>
<dbReference type="IntAct" id="Q9BYZ8">
    <property type="interactions" value="8"/>
</dbReference>
<dbReference type="STRING" id="9606.ENSP00000346158"/>
<dbReference type="MEROPS" id="I63.002"/>
<dbReference type="UniLectin" id="Q9BYZ8"/>
<dbReference type="GlyCosmos" id="Q9BYZ8">
    <property type="glycosylation" value="1 site, No reported glycans"/>
</dbReference>
<dbReference type="GlyGen" id="Q9BYZ8">
    <property type="glycosylation" value="1 site"/>
</dbReference>
<dbReference type="iPTMnet" id="Q9BYZ8"/>
<dbReference type="PhosphoSitePlus" id="Q9BYZ8"/>
<dbReference type="BioMuta" id="REG4"/>
<dbReference type="DMDM" id="68565834"/>
<dbReference type="MassIVE" id="Q9BYZ8"/>
<dbReference type="PaxDb" id="9606-ENSP00000346158"/>
<dbReference type="PeptideAtlas" id="Q9BYZ8"/>
<dbReference type="ProteomicsDB" id="79745">
    <molecule id="Q9BYZ8-1"/>
</dbReference>
<dbReference type="ProteomicsDB" id="79746">
    <molecule id="Q9BYZ8-2"/>
</dbReference>
<dbReference type="Antibodypedia" id="46951">
    <property type="antibodies" value="223 antibodies from 27 providers"/>
</dbReference>
<dbReference type="DNASU" id="83998"/>
<dbReference type="Ensembl" id="ENST00000256585.10">
    <molecule id="Q9BYZ8-1"/>
    <property type="protein sequence ID" value="ENSP00000256585.5"/>
    <property type="gene ID" value="ENSG00000134193.15"/>
</dbReference>
<dbReference type="Ensembl" id="ENST00000354219.5">
    <molecule id="Q9BYZ8-1"/>
    <property type="protein sequence ID" value="ENSP00000346158.1"/>
    <property type="gene ID" value="ENSG00000134193.15"/>
</dbReference>
<dbReference type="Ensembl" id="ENST00000369401.4">
    <molecule id="Q9BYZ8-2"/>
    <property type="protein sequence ID" value="ENSP00000358409.4"/>
    <property type="gene ID" value="ENSG00000134193.15"/>
</dbReference>
<dbReference type="GeneID" id="83998"/>
<dbReference type="KEGG" id="hsa:83998"/>
<dbReference type="MANE-Select" id="ENST00000256585.10">
    <property type="protein sequence ID" value="ENSP00000256585.5"/>
    <property type="RefSeq nucleotide sequence ID" value="NM_032044.4"/>
    <property type="RefSeq protein sequence ID" value="NP_114433.1"/>
</dbReference>
<dbReference type="UCSC" id="uc001eif.4">
    <molecule id="Q9BYZ8-1"/>
    <property type="organism name" value="human"/>
</dbReference>
<dbReference type="AGR" id="HGNC:22977"/>
<dbReference type="CTD" id="83998"/>
<dbReference type="DisGeNET" id="83998"/>
<dbReference type="GeneCards" id="REG4"/>
<dbReference type="HGNC" id="HGNC:22977">
    <property type="gene designation" value="REG4"/>
</dbReference>
<dbReference type="HPA" id="ENSG00000134193">
    <property type="expression patterns" value="Tissue enriched (intestine)"/>
</dbReference>
<dbReference type="MIM" id="609846">
    <property type="type" value="gene"/>
</dbReference>
<dbReference type="neXtProt" id="NX_Q9BYZ8"/>
<dbReference type="OpenTargets" id="ENSG00000134193"/>
<dbReference type="PharmGKB" id="PA134888932"/>
<dbReference type="VEuPathDB" id="HostDB:ENSG00000134193"/>
<dbReference type="eggNOG" id="KOG4297">
    <property type="taxonomic scope" value="Eukaryota"/>
</dbReference>
<dbReference type="GeneTree" id="ENSGT00940000161011"/>
<dbReference type="HOGENOM" id="CLU_049894_10_1_1"/>
<dbReference type="InParanoid" id="Q9BYZ8"/>
<dbReference type="OMA" id="RSHCYGY"/>
<dbReference type="OrthoDB" id="441660at2759"/>
<dbReference type="PAN-GO" id="Q9BYZ8">
    <property type="GO annotations" value="2 GO annotations based on evolutionary models"/>
</dbReference>
<dbReference type="PhylomeDB" id="Q9BYZ8"/>
<dbReference type="PathwayCommons" id="Q9BYZ8"/>
<dbReference type="SignaLink" id="Q9BYZ8"/>
<dbReference type="BioGRID-ORCS" id="83998">
    <property type="hits" value="18 hits in 1151 CRISPR screens"/>
</dbReference>
<dbReference type="ChiTaRS" id="REG4">
    <property type="organism name" value="human"/>
</dbReference>
<dbReference type="EvolutionaryTrace" id="Q9BYZ8"/>
<dbReference type="GeneWiki" id="REG4"/>
<dbReference type="GenomeRNAi" id="83998"/>
<dbReference type="Pharos" id="Q9BYZ8">
    <property type="development level" value="Tbio"/>
</dbReference>
<dbReference type="PRO" id="PR:Q9BYZ8"/>
<dbReference type="Proteomes" id="UP000005640">
    <property type="component" value="Chromosome 1"/>
</dbReference>
<dbReference type="RNAct" id="Q9BYZ8">
    <property type="molecule type" value="protein"/>
</dbReference>
<dbReference type="Bgee" id="ENSG00000134193">
    <property type="expression patterns" value="Expressed in ileal mucosa and 89 other cell types or tissues"/>
</dbReference>
<dbReference type="ExpressionAtlas" id="Q9BYZ8">
    <property type="expression patterns" value="baseline and differential"/>
</dbReference>
<dbReference type="GO" id="GO:0005737">
    <property type="term" value="C:cytoplasm"/>
    <property type="evidence" value="ECO:0000314"/>
    <property type="project" value="UniProtKB"/>
</dbReference>
<dbReference type="GO" id="GO:0005576">
    <property type="term" value="C:extracellular region"/>
    <property type="evidence" value="ECO:0007669"/>
    <property type="project" value="UniProtKB-SubCell"/>
</dbReference>
<dbReference type="GO" id="GO:0008201">
    <property type="term" value="F:heparin binding"/>
    <property type="evidence" value="ECO:0000314"/>
    <property type="project" value="UniProtKB"/>
</dbReference>
<dbReference type="GO" id="GO:2001065">
    <property type="term" value="F:mannan binding"/>
    <property type="evidence" value="ECO:0000314"/>
    <property type="project" value="UniProtKB"/>
</dbReference>
<dbReference type="GO" id="GO:0038023">
    <property type="term" value="F:signaling receptor activity"/>
    <property type="evidence" value="ECO:0000318"/>
    <property type="project" value="GO_Central"/>
</dbReference>
<dbReference type="GO" id="GO:0009617">
    <property type="term" value="P:response to bacterium"/>
    <property type="evidence" value="ECO:0007669"/>
    <property type="project" value="Ensembl"/>
</dbReference>
<dbReference type="CDD" id="cd03594">
    <property type="entry name" value="CLECT_REG-1_like"/>
    <property type="match status" value="1"/>
</dbReference>
<dbReference type="FunFam" id="3.10.100.10:FF:000015">
    <property type="entry name" value="C-type lectin Cal"/>
    <property type="match status" value="1"/>
</dbReference>
<dbReference type="Gene3D" id="3.10.100.10">
    <property type="entry name" value="Mannose-Binding Protein A, subunit A"/>
    <property type="match status" value="1"/>
</dbReference>
<dbReference type="InterPro" id="IPR001304">
    <property type="entry name" value="C-type_lectin-like"/>
</dbReference>
<dbReference type="InterPro" id="IPR016186">
    <property type="entry name" value="C-type_lectin-like/link_sf"/>
</dbReference>
<dbReference type="InterPro" id="IPR050111">
    <property type="entry name" value="C-type_lectin/snaclec_domain"/>
</dbReference>
<dbReference type="InterPro" id="IPR018378">
    <property type="entry name" value="C-type_lectin_CS"/>
</dbReference>
<dbReference type="InterPro" id="IPR016187">
    <property type="entry name" value="CTDL_fold"/>
</dbReference>
<dbReference type="PANTHER" id="PTHR22803">
    <property type="entry name" value="MANNOSE, PHOSPHOLIPASE, LECTIN RECEPTOR RELATED"/>
    <property type="match status" value="1"/>
</dbReference>
<dbReference type="Pfam" id="PF00059">
    <property type="entry name" value="Lectin_C"/>
    <property type="match status" value="1"/>
</dbReference>
<dbReference type="PRINTS" id="PR01504">
    <property type="entry name" value="PNCREATITSAP"/>
</dbReference>
<dbReference type="SMART" id="SM00034">
    <property type="entry name" value="CLECT"/>
    <property type="match status" value="1"/>
</dbReference>
<dbReference type="SUPFAM" id="SSF56436">
    <property type="entry name" value="C-type lectin-like"/>
    <property type="match status" value="1"/>
</dbReference>
<dbReference type="PROSITE" id="PS00615">
    <property type="entry name" value="C_TYPE_LECTIN_1"/>
    <property type="match status" value="1"/>
</dbReference>
<dbReference type="PROSITE" id="PS50041">
    <property type="entry name" value="C_TYPE_LECTIN_2"/>
    <property type="match status" value="1"/>
</dbReference>
<protein>
    <recommendedName>
        <fullName>Regenerating islet-derived protein 4</fullName>
        <shortName>REG-4</shortName>
    </recommendedName>
    <alternativeName>
        <fullName>Gastrointestinal secretory protein</fullName>
    </alternativeName>
    <alternativeName>
        <fullName>REG-like protein</fullName>
    </alternativeName>
    <alternativeName>
        <fullName>Regenerating islet-derived protein IV</fullName>
        <shortName>Reg IV</shortName>
    </alternativeName>
</protein>
<reference key="1">
    <citation type="journal article" date="2001" name="Biochim. Biophys. Acta">
        <title>Isolation and characterization of a cDNA encoding a novel member of the human regenerating protein family: Reg IV.</title>
        <authorList>
            <person name="Hartupee J.C."/>
            <person name="Zhang H."/>
            <person name="Bonaldo M.F."/>
            <person name="Soares M.B."/>
            <person name="Dieckgraefe B.K."/>
        </authorList>
    </citation>
    <scope>NUCLEOTIDE SEQUENCE [MRNA] (ISOFORM 1)</scope>
    <scope>TISSUE SPECIFICITY</scope>
    <scope>INDUCTION</scope>
</reference>
<reference key="2">
    <citation type="journal article" date="2003" name="Am. J. Pathol.">
        <title>RELP, a novel human REG-like protein with up-regulated expression in inflammatory and metaplastic gastrointestinal mucosa.</title>
        <authorList>
            <person name="Kaemaeraeinen M."/>
            <person name="Heiskala K."/>
            <person name="Knuutila S."/>
            <person name="Heiskala M."/>
            <person name="Winqvist O."/>
            <person name="Andersson L.C."/>
        </authorList>
    </citation>
    <scope>NUCLEOTIDE SEQUENCE [MRNA] (ISOFORMS 1 AND 2)</scope>
    <scope>FUNCTION</scope>
    <scope>SUBCELLULAR LOCATION</scope>
    <scope>TISSUE SPECIFICITY</scope>
    <scope>INDUCTION</scope>
</reference>
<reference key="3">
    <citation type="journal article" date="2003" name="Int. J. Cancer">
        <title>Reg IV, a new member of the regenerating gene family, is overexpressed in colorectal carcinomas.</title>
        <authorList>
            <person name="Violette S."/>
            <person name="Festor E."/>
            <person name="Pandrea-Vasile I."/>
            <person name="Mitchell V."/>
            <person name="Adida C."/>
            <person name="Dussaulx E."/>
            <person name="Lacorte J.-M."/>
            <person name="Chambaz J."/>
            <person name="Lacasa M."/>
            <person name="Lesuffleur T."/>
        </authorList>
    </citation>
    <scope>NUCLEOTIDE SEQUENCE [MRNA] (ISOFORM 1)</scope>
    <scope>TISSUE SPECIFICITY</scope>
    <scope>INDUCTION</scope>
    <source>
        <tissue>Colon cancer</tissue>
    </source>
</reference>
<reference key="4">
    <citation type="submission" date="2000-04" db="EMBL/GenBank/DDBJ databases">
        <title>Identification of gastrointestinal secretory protein (GISP), a new member of lithostathine gene family.</title>
        <authorList>
            <person name="Lin W.-C."/>
        </authorList>
    </citation>
    <scope>NUCLEOTIDE SEQUENCE [MRNA] (ISOFORM 1)</scope>
</reference>
<reference key="5">
    <citation type="journal article" date="2006" name="Nature">
        <title>The DNA sequence and biological annotation of human chromosome 1.</title>
        <authorList>
            <person name="Gregory S.G."/>
            <person name="Barlow K.F."/>
            <person name="McLay K.E."/>
            <person name="Kaul R."/>
            <person name="Swarbreck D."/>
            <person name="Dunham A."/>
            <person name="Scott C.E."/>
            <person name="Howe K.L."/>
            <person name="Woodfine K."/>
            <person name="Spencer C.C.A."/>
            <person name="Jones M.C."/>
            <person name="Gillson C."/>
            <person name="Searle S."/>
            <person name="Zhou Y."/>
            <person name="Kokocinski F."/>
            <person name="McDonald L."/>
            <person name="Evans R."/>
            <person name="Phillips K."/>
            <person name="Atkinson A."/>
            <person name="Cooper R."/>
            <person name="Jones C."/>
            <person name="Hall R.E."/>
            <person name="Andrews T.D."/>
            <person name="Lloyd C."/>
            <person name="Ainscough R."/>
            <person name="Almeida J.P."/>
            <person name="Ambrose K.D."/>
            <person name="Anderson F."/>
            <person name="Andrew R.W."/>
            <person name="Ashwell R.I.S."/>
            <person name="Aubin K."/>
            <person name="Babbage A.K."/>
            <person name="Bagguley C.L."/>
            <person name="Bailey J."/>
            <person name="Beasley H."/>
            <person name="Bethel G."/>
            <person name="Bird C.P."/>
            <person name="Bray-Allen S."/>
            <person name="Brown J.Y."/>
            <person name="Brown A.J."/>
            <person name="Buckley D."/>
            <person name="Burton J."/>
            <person name="Bye J."/>
            <person name="Carder C."/>
            <person name="Chapman J.C."/>
            <person name="Clark S.Y."/>
            <person name="Clarke G."/>
            <person name="Clee C."/>
            <person name="Cobley V."/>
            <person name="Collier R.E."/>
            <person name="Corby N."/>
            <person name="Coville G.J."/>
            <person name="Davies J."/>
            <person name="Deadman R."/>
            <person name="Dunn M."/>
            <person name="Earthrowl M."/>
            <person name="Ellington A.G."/>
            <person name="Errington H."/>
            <person name="Frankish A."/>
            <person name="Frankland J."/>
            <person name="French L."/>
            <person name="Garner P."/>
            <person name="Garnett J."/>
            <person name="Gay L."/>
            <person name="Ghori M.R.J."/>
            <person name="Gibson R."/>
            <person name="Gilby L.M."/>
            <person name="Gillett W."/>
            <person name="Glithero R.J."/>
            <person name="Grafham D.V."/>
            <person name="Griffiths C."/>
            <person name="Griffiths-Jones S."/>
            <person name="Grocock R."/>
            <person name="Hammond S."/>
            <person name="Harrison E.S.I."/>
            <person name="Hart E."/>
            <person name="Haugen E."/>
            <person name="Heath P.D."/>
            <person name="Holmes S."/>
            <person name="Holt K."/>
            <person name="Howden P.J."/>
            <person name="Hunt A.R."/>
            <person name="Hunt S.E."/>
            <person name="Hunter G."/>
            <person name="Isherwood J."/>
            <person name="James R."/>
            <person name="Johnson C."/>
            <person name="Johnson D."/>
            <person name="Joy A."/>
            <person name="Kay M."/>
            <person name="Kershaw J.K."/>
            <person name="Kibukawa M."/>
            <person name="Kimberley A.M."/>
            <person name="King A."/>
            <person name="Knights A.J."/>
            <person name="Lad H."/>
            <person name="Laird G."/>
            <person name="Lawlor S."/>
            <person name="Leongamornlert D.A."/>
            <person name="Lloyd D.M."/>
            <person name="Loveland J."/>
            <person name="Lovell J."/>
            <person name="Lush M.J."/>
            <person name="Lyne R."/>
            <person name="Martin S."/>
            <person name="Mashreghi-Mohammadi M."/>
            <person name="Matthews L."/>
            <person name="Matthews N.S.W."/>
            <person name="McLaren S."/>
            <person name="Milne S."/>
            <person name="Mistry S."/>
            <person name="Moore M.J.F."/>
            <person name="Nickerson T."/>
            <person name="O'Dell C.N."/>
            <person name="Oliver K."/>
            <person name="Palmeiri A."/>
            <person name="Palmer S.A."/>
            <person name="Parker A."/>
            <person name="Patel D."/>
            <person name="Pearce A.V."/>
            <person name="Peck A.I."/>
            <person name="Pelan S."/>
            <person name="Phelps K."/>
            <person name="Phillimore B.J."/>
            <person name="Plumb R."/>
            <person name="Rajan J."/>
            <person name="Raymond C."/>
            <person name="Rouse G."/>
            <person name="Saenphimmachak C."/>
            <person name="Sehra H.K."/>
            <person name="Sheridan E."/>
            <person name="Shownkeen R."/>
            <person name="Sims S."/>
            <person name="Skuce C.D."/>
            <person name="Smith M."/>
            <person name="Steward C."/>
            <person name="Subramanian S."/>
            <person name="Sycamore N."/>
            <person name="Tracey A."/>
            <person name="Tromans A."/>
            <person name="Van Helmond Z."/>
            <person name="Wall M."/>
            <person name="Wallis J.M."/>
            <person name="White S."/>
            <person name="Whitehead S.L."/>
            <person name="Wilkinson J.E."/>
            <person name="Willey D.L."/>
            <person name="Williams H."/>
            <person name="Wilming L."/>
            <person name="Wray P.W."/>
            <person name="Wu Z."/>
            <person name="Coulson A."/>
            <person name="Vaudin M."/>
            <person name="Sulston J.E."/>
            <person name="Durbin R.M."/>
            <person name="Hubbard T."/>
            <person name="Wooster R."/>
            <person name="Dunham I."/>
            <person name="Carter N.P."/>
            <person name="McVean G."/>
            <person name="Ross M.T."/>
            <person name="Harrow J."/>
            <person name="Olson M.V."/>
            <person name="Beck S."/>
            <person name="Rogers J."/>
            <person name="Bentley D.R."/>
        </authorList>
    </citation>
    <scope>NUCLEOTIDE SEQUENCE [LARGE SCALE GENOMIC DNA]</scope>
</reference>
<reference key="6">
    <citation type="journal article" date="2004" name="Genome Res.">
        <title>The status, quality, and expansion of the NIH full-length cDNA project: the Mammalian Gene Collection (MGC).</title>
        <authorList>
            <consortium name="The MGC Project Team"/>
        </authorList>
    </citation>
    <scope>NUCLEOTIDE SEQUENCE [LARGE SCALE MRNA] (ISOFORM 1)</scope>
    <source>
        <tissue>Colon</tissue>
    </source>
</reference>
<reference key="7">
    <citation type="journal article" date="2004" name="Protein Sci.">
        <title>Signal peptide prediction based on analysis of experimentally verified cleavage sites.</title>
        <authorList>
            <person name="Zhang Z."/>
            <person name="Henzel W.J."/>
        </authorList>
    </citation>
    <scope>PROTEIN SEQUENCE OF 23-37</scope>
</reference>
<reference key="8">
    <citation type="journal article" date="2010" name="J. Mol. Biol.">
        <title>Human RegIV protein adopts a typical C-type lectin fold but binds mannan with two calcium-independent sites.</title>
        <authorList>
            <person name="Ho M.R."/>
            <person name="Lou Y.C."/>
            <person name="Wei S.Y."/>
            <person name="Luo S.C."/>
            <person name="Lin W.C."/>
            <person name="Lyu P.C."/>
            <person name="Chen C."/>
        </authorList>
    </citation>
    <scope>STRUCTURE BY NMR OF 29-158 OF MUTANT SER-91</scope>
    <scope>FUNCTION</scope>
    <scope>MANNAN-BINDING</scope>
    <scope>HEPARIN-BINDING</scope>
    <scope>DISULFIDE BONDS</scope>
</reference>
<name>REG4_HUMAN</name>
<keyword id="KW-0002">3D-structure</keyword>
<keyword id="KW-0025">Alternative splicing</keyword>
<keyword id="KW-0903">Direct protein sequencing</keyword>
<keyword id="KW-1015">Disulfide bond</keyword>
<keyword id="KW-0325">Glycoprotein</keyword>
<keyword id="KW-0430">Lectin</keyword>
<keyword id="KW-1267">Proteomics identification</keyword>
<keyword id="KW-1185">Reference proteome</keyword>
<keyword id="KW-0964">Secreted</keyword>
<keyword id="KW-0732">Signal</keyword>